<comment type="function">
    <text evidence="1">GP1 is responsible for binding to the receptor(s) on target cells. Interacts with CD209/DC-SIGN and CLEC4M/DC-SIGNR which act as cofactors for virus entry into the host cell. Binding to CD209 and CLEC4M, which are respectively found on dendritic cells (DCs), and on endothelial cells of liver sinusoids and lymph node sinuses, facilitate infection of macrophages and endothelial cells. These interactions not only facilitate virus cell entry, but also allow capture of viral particles by DCs and subsequent transmission to susceptible cells without DCs infection (trans infection) (By similarity).</text>
</comment>
<comment type="function">
    <text evidence="1">GP2 acts as a class I viral fusion protein. Under the current model, the protein has at least 3 conformational states: pre-fusion native state, pre-hairpin intermediate state, and post-fusion hairpin state. During viral and target cell membrane fusion, the coiled coil regions (heptad repeats) assume a trimer-of-hairpins structure, positioning the fusion peptide in close proximity to the C-terminal region of the ectodomain. The formation of this structure appears to drive apposition and subsequent fusion of viral and target cell membranes. Responsible for penetration of the virus into the cell cytoplasm by mediating the fusion of the membrane of the endocytosed virus particle with the endosomal membrane. Low pH in endosomes induces an irreversible conformational change in GP2, releasing the fusion hydrophobic peptide (By similarity).</text>
</comment>
<comment type="subunit">
    <text evidence="1">Homotrimer; each monomer consists of a GP1 and a GP2 subunit linked by disulfide bonds. The resulting peplomers (GP1,2) protrude from the virus surface as spikes. GP1,2 interacts with human CD209 and CLEC4M (collectively referred to as DC-SIGN(R)). Asialoglycoprotein receptor (ASGP-R) may be a liver-specific receptor for GP1,2. Members of the Tyro3 receptor tyrosine kinase family may be cell entry factors interacting with GP1,2 (By similarity).</text>
</comment>
<comment type="subcellular location">
    <molecule>GP2</molecule>
    <subcellularLocation>
        <location evidence="3">Virion membrane</location>
        <topology evidence="4">Single-pass type I membrane protein</topology>
    </subcellularLocation>
    <subcellularLocation>
        <location evidence="3">Host cell membrane</location>
        <topology evidence="4">Single-pass type I membrane protein</topology>
    </subcellularLocation>
    <text evidence="3">In the cell, localizes to the plasma membrane lipid rafts, which probably represent the assembly and budding site.</text>
</comment>
<comment type="subcellular location">
    <molecule>GP1</molecule>
    <subcellularLocation>
        <location evidence="3">Virion membrane</location>
        <topology evidence="3">Peripheral membrane protein</topology>
    </subcellularLocation>
    <subcellularLocation>
        <location evidence="3">Host cell membrane</location>
        <topology evidence="3">Peripheral membrane protein</topology>
    </subcellularLocation>
    <text evidence="3">GP1 is not anchored to the viral envelope, but forms a disulfid-linked complex with the extravirion surface GP2. In the cell, both GP1 and GP2 localize to the plasma membrane lipid rafts, which probably represent the assembly and budding site. GP1 can also be shed after proteolytic processing.</text>
</comment>
<comment type="domain">
    <text evidence="1">The coiled coil regions play a role in oligomerization and fusion activity.</text>
</comment>
<comment type="domain">
    <text evidence="1">The transmembrane domain is essential and sufficient for recruitment envelope glycoproteins into VP40-enriched multivesicular bodies.</text>
</comment>
<comment type="PTM">
    <text evidence="1">N-glycosylated.</text>
</comment>
<comment type="PTM">
    <text evidence="1">O-glycosylated in the mucin-like region.</text>
</comment>
<comment type="PTM">
    <text evidence="1">Specific enzymatic cleavages in vivo yield mature proteins. The precursor is processed into GP1 and GP2 by host cell furin in the trans Golgi, and maybe by other host proteases, to yield the mature GP1 and GP2 proteins. The cleavage site corresponds to the furin optimal cleavage sequence [KR]-X-[KR]-R (By similarity).</text>
</comment>
<comment type="PTM">
    <text evidence="1">GP1 is phosphorylated on serine residues between residues 260 and 273.</text>
</comment>
<comment type="miscellaneous">
    <text evidence="1">Filoviruses entry requires functional lipid rafts at the host cell surface.</text>
</comment>
<comment type="miscellaneous">
    <text evidence="1">Essential for infectivity, as it is the sole viral protein expressed at the virion surface.</text>
</comment>
<comment type="similarity">
    <text evidence="6">Belongs to the filoviruses glycoprotein family.</text>
</comment>
<gene>
    <name type="primary">GP</name>
</gene>
<feature type="signal peptide" evidence="1">
    <location>
        <begin position="1"/>
        <end position="18"/>
    </location>
</feature>
<feature type="chain" id="PRO_0000314976" description="Envelope glycoprotein" evidence="1">
    <location>
        <begin position="19"/>
        <end position="681"/>
    </location>
</feature>
<feature type="chain" id="PRO_0000314977" description="GP1" evidence="1">
    <location>
        <begin position="33"/>
        <end position="435"/>
    </location>
</feature>
<feature type="chain" id="PRO_0000314978" description="GP2" evidence="1">
    <location>
        <begin position="436"/>
        <end position="681"/>
    </location>
</feature>
<feature type="topological domain" description="Extracellular" evidence="4">
    <location>
        <begin position="19"/>
        <end position="648"/>
    </location>
</feature>
<feature type="transmembrane region" description="Helical" evidence="4">
    <location>
        <begin position="649"/>
        <end position="669"/>
    </location>
</feature>
<feature type="topological domain" description="Cytoplasmic" evidence="4">
    <location>
        <begin position="670"/>
        <end position="681"/>
    </location>
</feature>
<feature type="region of interest" description="Receptor-binding" evidence="1">
    <location>
        <begin position="38"/>
        <end position="188"/>
    </location>
</feature>
<feature type="region of interest" description="Disordered" evidence="5">
    <location>
        <begin position="222"/>
        <end position="424"/>
    </location>
</feature>
<feature type="region of interest" description="Mucin-like region" evidence="1">
    <location>
        <begin position="277"/>
        <end position="455"/>
    </location>
</feature>
<feature type="region of interest" description="Fusion peptide" evidence="1">
    <location>
        <begin position="529"/>
        <end position="549"/>
    </location>
</feature>
<feature type="compositionally biased region" description="Polar residues" evidence="5">
    <location>
        <begin position="244"/>
        <end position="259"/>
    </location>
</feature>
<feature type="compositionally biased region" description="Polar residues" evidence="5">
    <location>
        <begin position="278"/>
        <end position="290"/>
    </location>
</feature>
<feature type="compositionally biased region" description="Polar residues" evidence="5">
    <location>
        <begin position="308"/>
        <end position="331"/>
    </location>
</feature>
<feature type="compositionally biased region" description="Low complexity" evidence="5">
    <location>
        <begin position="337"/>
        <end position="347"/>
    </location>
</feature>
<feature type="compositionally biased region" description="Polar residues" evidence="5">
    <location>
        <begin position="348"/>
        <end position="388"/>
    </location>
</feature>
<feature type="compositionally biased region" description="Low complexity" evidence="5">
    <location>
        <begin position="389"/>
        <end position="424"/>
    </location>
</feature>
<feature type="site" description="Cleavage; by host furin" evidence="1">
    <location>
        <begin position="435"/>
        <end position="436"/>
    </location>
</feature>
<feature type="lipid moiety-binding region" description="S-palmitoyl cysteine; by host" evidence="2">
    <location>
        <position position="671"/>
    </location>
</feature>
<feature type="lipid moiety-binding region" description="S-palmitoyl cysteine; by host" evidence="2">
    <location>
        <position position="673"/>
    </location>
</feature>
<feature type="glycosylation site" description="N-linked (GlcNAc...) asparagine; by host" evidence="4">
    <location>
        <position position="94"/>
    </location>
</feature>
<feature type="glycosylation site" description="N-linked (GlcNAc...) asparagine; by host" evidence="4">
    <location>
        <position position="171"/>
    </location>
</feature>
<feature type="glycosylation site" description="N-linked (GlcNAc...) asparagine; by host" evidence="4">
    <location>
        <position position="190"/>
    </location>
</feature>
<feature type="glycosylation site" description="N-linked (GlcNAc...) asparagine; by host" evidence="4">
    <location>
        <position position="202"/>
    </location>
</feature>
<feature type="glycosylation site" description="N-linked (GlcNAc...) asparagine; by host" evidence="4">
    <location>
        <position position="207"/>
    </location>
</feature>
<feature type="glycosylation site" description="N-linked (GlcNAc...) asparagine; by host" evidence="4">
    <location>
        <position position="219"/>
    </location>
</feature>
<feature type="glycosylation site" description="N-linked (GlcNAc...) asparagine; by host" evidence="4">
    <location>
        <position position="223"/>
    </location>
</feature>
<feature type="glycosylation site" description="N-linked (GlcNAc...) asparagine; by host" evidence="4">
    <location>
        <position position="255"/>
    </location>
</feature>
<feature type="glycosylation site" description="N-linked (GlcNAc...) asparagine; by host" evidence="4">
    <location>
        <position position="310"/>
    </location>
</feature>
<feature type="glycosylation site" description="N-linked (GlcNAc...) asparagine; by host" evidence="4">
    <location>
        <position position="313"/>
    </location>
</feature>
<feature type="glycosylation site" description="N-linked (GlcNAc...) asparagine; by host" evidence="4">
    <location>
        <position position="326"/>
    </location>
</feature>
<feature type="glycosylation site" description="N-linked (GlcNAc...) asparagine; by host" evidence="4">
    <location>
        <position position="337"/>
    </location>
</feature>
<feature type="glycosylation site" description="N-linked (GlcNAc...) asparagine; by host" evidence="4">
    <location>
        <position position="344"/>
    </location>
</feature>
<feature type="glycosylation site" description="N-linked (GlcNAc...) asparagine; by host" evidence="4">
    <location>
        <position position="345"/>
    </location>
</feature>
<feature type="glycosylation site" description="N-linked (GlcNAc...) asparagine; by host" evidence="4">
    <location>
        <position position="350"/>
    </location>
</feature>
<feature type="glycosylation site" description="N-linked (GlcNAc...) asparagine; by host" evidence="4">
    <location>
        <position position="360"/>
    </location>
</feature>
<feature type="glycosylation site" description="N-linked (GlcNAc...) asparagine; by host" evidence="4">
    <location>
        <position position="397"/>
    </location>
</feature>
<feature type="glycosylation site" description="N-linked (GlcNAc...) asparagine; by host" evidence="4">
    <location>
        <position position="408"/>
    </location>
</feature>
<feature type="glycosylation site" description="N-linked (GlcNAc...) asparagine; by host" evidence="4">
    <location>
        <position position="422"/>
    </location>
</feature>
<feature type="glycosylation site" description="N-linked (GlcNAc...) asparagine; by host" evidence="4">
    <location>
        <position position="487"/>
    </location>
</feature>
<feature type="glycosylation site" description="N-linked (GlcNAc...) asparagine; by host" evidence="4">
    <location>
        <position position="564"/>
    </location>
</feature>
<feature type="glycosylation site" description="N-linked (GlcNAc...) asparagine; by host" evidence="4">
    <location>
        <position position="619"/>
    </location>
</feature>
<accession>Q1PD50</accession>
<protein>
    <recommendedName>
        <fullName>Envelope glycoprotein</fullName>
    </recommendedName>
    <alternativeName>
        <fullName>GP1,2</fullName>
        <shortName>GP</shortName>
    </alternativeName>
    <alternativeName>
        <fullName>Virion spike glycoprotein</fullName>
    </alternativeName>
    <component>
        <recommendedName>
            <fullName>GP1</fullName>
        </recommendedName>
    </component>
    <component>
        <recommendedName>
            <fullName>GP2</fullName>
        </recommendedName>
    </component>
</protein>
<organismHost>
    <name type="scientific">Chlorocebus aethiops</name>
    <name type="common">Green monkey</name>
    <name type="synonym">Cercopithecus aethiops</name>
    <dbReference type="NCBI Taxonomy" id="9534"/>
</organismHost>
<organismHost>
    <name type="scientific">Homo sapiens</name>
    <name type="common">Human</name>
    <dbReference type="NCBI Taxonomy" id="9606"/>
</organismHost>
<organismHost>
    <name type="scientific">Rousettus aegyptiacus</name>
    <name type="common">Egyptian fruit bat</name>
    <name type="synonym">Pteropus aegyptiacus</name>
    <dbReference type="NCBI Taxonomy" id="9407"/>
</organismHost>
<name>VGP_MABVA</name>
<reference key="1">
    <citation type="journal article" date="2006" name="J. Virol.">
        <title>Marburgvirus genomics and association with a large hemorrhagic fever outbreak in Angola.</title>
        <authorList>
            <person name="Towner J.S."/>
            <person name="Khristova M.L."/>
            <person name="Sealy T.K."/>
            <person name="Vincent M.J."/>
            <person name="Erickson B.R."/>
            <person name="Bawiec D.A."/>
            <person name="Hartman A.L."/>
            <person name="Comer J.A."/>
            <person name="Zaki S.R."/>
            <person name="Stroeher U."/>
            <person name="Gomes da Silva F."/>
            <person name="del Castillo F."/>
            <person name="Rollin P.E."/>
            <person name="Ksiazek T.G."/>
            <person name="Nichol S.T."/>
        </authorList>
    </citation>
    <scope>NUCLEOTIDE SEQUENCE [GENOMIC RNA]</scope>
    <source>
        <strain>Isolate Ang0126</strain>
        <strain>Isolate Ang0214</strain>
        <strain>Isolate Ang0215</strain>
        <strain>Isolate Ang0754</strain>
        <strain>Isolate Ang0998</strain>
        <strain>Isolate Ang1379c</strain>
        <strain>Isolate Ang1381</strain>
        <strain>Isolate Ang1386</strain>
    </source>
</reference>
<evidence type="ECO:0000250" key="1"/>
<evidence type="ECO:0000250" key="2">
    <source>
        <dbReference type="UniProtKB" id="P35253"/>
    </source>
</evidence>
<evidence type="ECO:0000250" key="3">
    <source>
        <dbReference type="UniProtKB" id="Q05320"/>
    </source>
</evidence>
<evidence type="ECO:0000255" key="4"/>
<evidence type="ECO:0000256" key="5">
    <source>
        <dbReference type="SAM" id="MobiDB-lite"/>
    </source>
</evidence>
<evidence type="ECO:0000305" key="6"/>
<proteinExistence type="inferred from homology"/>
<sequence>MKTTCLLISLILIQGVKTLPILEIASNIQPQNVDSVCSGTLQKTEDVHLMGFTLSGQKVADSPLEASKRWAFRAGVPPKNVEYTEGEEAKTCYNISVTDPSGKSLLLDPPTNIRDYPKCKTIHHIQGQNPHAQGIALHLWGAFFLYDRIASTTMYRGKVFTEGNIAAMIVNKTVHKMIFSRQGQGYRHMNLTSTNKYWTSSNGTQTNDTGCFGTLQEYNSTKNQTCAPSKKPLPLPTAHPEVKLTSTSTDATKLNTTDPNSDDEDLTTSGSGSGEQEPYTTSDAATKQGLSSTMPPTPSPQPSTPQQGGNNTNHSQGVVTEPGKTNTTAQPSMPPHNTTTISTNNTSKHNLSTPSVPIQNATNYNTQSTAPENEQTSAPSKTTLLPTENPTTAKSTNSTKSPTTTVPNTTNKYSTSPSPTPNSTAQHLVYFRRKRNILWREGDMFPFLDGLINAPIDFDPVPNTKTIFDESSSSGASAEEDQHASPNISLTLSYFPKVNENTAHSGENENDCDAELRIWSVQEDDLAAGLSWIPFFGPGIEGLYTAGLIKNQNNLVCRLRRLANQTAKSLELLLRVTTEERTFSLINRHAIDFLLARWGGTCKVLGPDCCIGIEDLSRNISEQIDQIKKDEQKEGTGWGLGGKWWTSDWGVLTNLGILLLLSIAVLIALSCICRIFTKYIG</sequence>
<organism>
    <name type="scientific">Lake Victoria marburgvirus (strain Angola/2005)</name>
    <name type="common">MARV</name>
    <dbReference type="NCBI Taxonomy" id="378830"/>
    <lineage>
        <taxon>Viruses</taxon>
        <taxon>Riboviria</taxon>
        <taxon>Orthornavirae</taxon>
        <taxon>Negarnaviricota</taxon>
        <taxon>Haploviricotina</taxon>
        <taxon>Monjiviricetes</taxon>
        <taxon>Mononegavirales</taxon>
        <taxon>Filoviridae</taxon>
        <taxon>Orthomarburgvirus</taxon>
        <taxon>Orthomarburgvirus marburgense</taxon>
    </lineage>
</organism>
<dbReference type="EMBL" id="DQ447653">
    <property type="protein sequence ID" value="ABE27015.1"/>
    <property type="molecule type" value="Genomic_RNA"/>
</dbReference>
<dbReference type="EMBL" id="DQ447654">
    <property type="protein sequence ID" value="ABE27022.1"/>
    <property type="molecule type" value="Genomic_RNA"/>
</dbReference>
<dbReference type="EMBL" id="DQ447655">
    <property type="protein sequence ID" value="ABE27029.1"/>
    <property type="molecule type" value="Genomic_RNA"/>
</dbReference>
<dbReference type="EMBL" id="DQ447656">
    <property type="protein sequence ID" value="ABE27036.1"/>
    <property type="molecule type" value="Genomic_RNA"/>
</dbReference>
<dbReference type="EMBL" id="DQ447657">
    <property type="protein sequence ID" value="ABE27043.1"/>
    <property type="molecule type" value="Genomic_RNA"/>
</dbReference>
<dbReference type="EMBL" id="DQ447658">
    <property type="protein sequence ID" value="ABE27050.1"/>
    <property type="molecule type" value="Genomic_RNA"/>
</dbReference>
<dbReference type="EMBL" id="DQ447659">
    <property type="protein sequence ID" value="ABE27057.1"/>
    <property type="molecule type" value="Genomic_RNA"/>
</dbReference>
<dbReference type="EMBL" id="DQ447660">
    <property type="protein sequence ID" value="ABE27064.1"/>
    <property type="molecule type" value="Genomic_RNA"/>
</dbReference>
<dbReference type="SMR" id="Q1PD50"/>
<dbReference type="GlyCosmos" id="Q1PD50">
    <property type="glycosylation" value="22 sites, No reported glycans"/>
</dbReference>
<dbReference type="Proteomes" id="UP000008242">
    <property type="component" value="Genome"/>
</dbReference>
<dbReference type="Proteomes" id="UP000097432">
    <property type="component" value="Genome"/>
</dbReference>
<dbReference type="Proteomes" id="UP000102513">
    <property type="component" value="Genome"/>
</dbReference>
<dbReference type="Proteomes" id="UP000109618">
    <property type="component" value="Genome"/>
</dbReference>
<dbReference type="Proteomes" id="UP000115353">
    <property type="component" value="Genome"/>
</dbReference>
<dbReference type="Proteomes" id="UP000130744">
    <property type="component" value="Genome"/>
</dbReference>
<dbReference type="Proteomes" id="UP000168007">
    <property type="component" value="Genome"/>
</dbReference>
<dbReference type="Proteomes" id="UP000171838">
    <property type="component" value="Genome"/>
</dbReference>
<dbReference type="GO" id="GO:0020002">
    <property type="term" value="C:host cell plasma membrane"/>
    <property type="evidence" value="ECO:0007669"/>
    <property type="project" value="UniProtKB-SubCell"/>
</dbReference>
<dbReference type="GO" id="GO:0016020">
    <property type="term" value="C:membrane"/>
    <property type="evidence" value="ECO:0007669"/>
    <property type="project" value="UniProtKB-KW"/>
</dbReference>
<dbReference type="GO" id="GO:0019031">
    <property type="term" value="C:viral envelope"/>
    <property type="evidence" value="ECO:0007669"/>
    <property type="project" value="UniProtKB-KW"/>
</dbReference>
<dbReference type="GO" id="GO:0055036">
    <property type="term" value="C:virion membrane"/>
    <property type="evidence" value="ECO:0007669"/>
    <property type="project" value="UniProtKB-SubCell"/>
</dbReference>
<dbReference type="GO" id="GO:0039654">
    <property type="term" value="P:fusion of virus membrane with host endosome membrane"/>
    <property type="evidence" value="ECO:0007669"/>
    <property type="project" value="UniProtKB-KW"/>
</dbReference>
<dbReference type="GO" id="GO:0046718">
    <property type="term" value="P:symbiont entry into host cell"/>
    <property type="evidence" value="ECO:0007669"/>
    <property type="project" value="UniProtKB-KW"/>
</dbReference>
<dbReference type="GO" id="GO:0019062">
    <property type="term" value="P:virion attachment to host cell"/>
    <property type="evidence" value="ECO:0007669"/>
    <property type="project" value="UniProtKB-KW"/>
</dbReference>
<dbReference type="CDD" id="cd09850">
    <property type="entry name" value="Ebola-like_HR1-HR2"/>
    <property type="match status" value="1"/>
</dbReference>
<dbReference type="Gene3D" id="1.10.287.210">
    <property type="match status" value="1"/>
</dbReference>
<dbReference type="InterPro" id="IPR054584">
    <property type="entry name" value="Ebola-like_HR1-HR2"/>
</dbReference>
<dbReference type="InterPro" id="IPR014625">
    <property type="entry name" value="GPC_FiloV"/>
</dbReference>
<dbReference type="InterPro" id="IPR002561">
    <property type="entry name" value="GPC_filovir-type_extra_dom"/>
</dbReference>
<dbReference type="InterPro" id="IPR018154">
    <property type="entry name" value="TLV/ENV_coat_polyprotein"/>
</dbReference>
<dbReference type="PANTHER" id="PTHR10424">
    <property type="entry name" value="VIRAL ENVELOPE PROTEIN"/>
    <property type="match status" value="1"/>
</dbReference>
<dbReference type="Pfam" id="PF22307">
    <property type="entry name" value="Ebola-like_HR1-HR2"/>
    <property type="match status" value="1"/>
</dbReference>
<dbReference type="Pfam" id="PF01611">
    <property type="entry name" value="Filo_glycop"/>
    <property type="match status" value="1"/>
</dbReference>
<dbReference type="PIRSF" id="PIRSF036874">
    <property type="entry name" value="GPC_FiloV"/>
    <property type="match status" value="1"/>
</dbReference>
<dbReference type="SUPFAM" id="SSF58069">
    <property type="entry name" value="Virus ectodomain"/>
    <property type="match status" value="1"/>
</dbReference>
<keyword id="KW-0165">Cleavage on pair of basic residues</keyword>
<keyword id="KW-1015">Disulfide bond</keyword>
<keyword id="KW-1170">Fusion of virus membrane with host endosomal membrane</keyword>
<keyword id="KW-1168">Fusion of virus membrane with host membrane</keyword>
<keyword id="KW-0325">Glycoprotein</keyword>
<keyword id="KW-1032">Host cell membrane</keyword>
<keyword id="KW-1043">Host membrane</keyword>
<keyword id="KW-0945">Host-virus interaction</keyword>
<keyword id="KW-0449">Lipoprotein</keyword>
<keyword id="KW-0472">Membrane</keyword>
<keyword id="KW-0564">Palmitate</keyword>
<keyword id="KW-0732">Signal</keyword>
<keyword id="KW-0812">Transmembrane</keyword>
<keyword id="KW-1133">Transmembrane helix</keyword>
<keyword id="KW-1161">Viral attachment to host cell</keyword>
<keyword id="KW-0261">Viral envelope protein</keyword>
<keyword id="KW-1162">Viral penetration into host cytoplasm</keyword>
<keyword id="KW-0946">Virion</keyword>
<keyword id="KW-1160">Virus entry into host cell</keyword>